<evidence type="ECO:0000255" key="1">
    <source>
        <dbReference type="HAMAP-Rule" id="MF_00551"/>
    </source>
</evidence>
<protein>
    <recommendedName>
        <fullName evidence="1">Uridine kinase</fullName>
        <ecNumber evidence="1">2.7.1.48</ecNumber>
    </recommendedName>
    <alternativeName>
        <fullName evidence="1">Cytidine monophosphokinase</fullName>
    </alternativeName>
    <alternativeName>
        <fullName evidence="1">Uridine monophosphokinase</fullName>
    </alternativeName>
</protein>
<accession>A4Y7K6</accession>
<name>URK_SHEPC</name>
<organism>
    <name type="scientific">Shewanella putrefaciens (strain CN-32 / ATCC BAA-453)</name>
    <dbReference type="NCBI Taxonomy" id="319224"/>
    <lineage>
        <taxon>Bacteria</taxon>
        <taxon>Pseudomonadati</taxon>
        <taxon>Pseudomonadota</taxon>
        <taxon>Gammaproteobacteria</taxon>
        <taxon>Alteromonadales</taxon>
        <taxon>Shewanellaceae</taxon>
        <taxon>Shewanella</taxon>
    </lineage>
</organism>
<feature type="chain" id="PRO_1000017895" description="Uridine kinase">
    <location>
        <begin position="1"/>
        <end position="212"/>
    </location>
</feature>
<feature type="binding site" evidence="1">
    <location>
        <begin position="13"/>
        <end position="20"/>
    </location>
    <ligand>
        <name>ATP</name>
        <dbReference type="ChEBI" id="CHEBI:30616"/>
    </ligand>
</feature>
<reference key="1">
    <citation type="submission" date="2007-04" db="EMBL/GenBank/DDBJ databases">
        <title>Complete sequence of Shewanella putrefaciens CN-32.</title>
        <authorList>
            <consortium name="US DOE Joint Genome Institute"/>
            <person name="Copeland A."/>
            <person name="Lucas S."/>
            <person name="Lapidus A."/>
            <person name="Barry K."/>
            <person name="Detter J.C."/>
            <person name="Glavina del Rio T."/>
            <person name="Hammon N."/>
            <person name="Israni S."/>
            <person name="Dalin E."/>
            <person name="Tice H."/>
            <person name="Pitluck S."/>
            <person name="Chain P."/>
            <person name="Malfatti S."/>
            <person name="Shin M."/>
            <person name="Vergez L."/>
            <person name="Schmutz J."/>
            <person name="Larimer F."/>
            <person name="Land M."/>
            <person name="Hauser L."/>
            <person name="Kyrpides N."/>
            <person name="Mikhailova N."/>
            <person name="Romine M.F."/>
            <person name="Fredrickson J."/>
            <person name="Tiedje J."/>
            <person name="Richardson P."/>
        </authorList>
    </citation>
    <scope>NUCLEOTIDE SEQUENCE [LARGE SCALE GENOMIC DNA]</scope>
    <source>
        <strain>CN-32 / ATCC BAA-453</strain>
    </source>
</reference>
<keyword id="KW-0067">ATP-binding</keyword>
<keyword id="KW-0963">Cytoplasm</keyword>
<keyword id="KW-0418">Kinase</keyword>
<keyword id="KW-0547">Nucleotide-binding</keyword>
<keyword id="KW-0808">Transferase</keyword>
<proteinExistence type="inferred from homology"/>
<dbReference type="EC" id="2.7.1.48" evidence="1"/>
<dbReference type="EMBL" id="CP000681">
    <property type="protein sequence ID" value="ABP75939.1"/>
    <property type="molecule type" value="Genomic_DNA"/>
</dbReference>
<dbReference type="SMR" id="A4Y7K6"/>
<dbReference type="STRING" id="319224.Sputcn32_2218"/>
<dbReference type="KEGG" id="spc:Sputcn32_2218"/>
<dbReference type="eggNOG" id="COG0572">
    <property type="taxonomic scope" value="Bacteria"/>
</dbReference>
<dbReference type="HOGENOM" id="CLU_021278_1_2_6"/>
<dbReference type="UniPathway" id="UPA00574">
    <property type="reaction ID" value="UER00637"/>
</dbReference>
<dbReference type="UniPathway" id="UPA00579">
    <property type="reaction ID" value="UER00640"/>
</dbReference>
<dbReference type="GO" id="GO:0005737">
    <property type="term" value="C:cytoplasm"/>
    <property type="evidence" value="ECO:0007669"/>
    <property type="project" value="UniProtKB-SubCell"/>
</dbReference>
<dbReference type="GO" id="GO:0005524">
    <property type="term" value="F:ATP binding"/>
    <property type="evidence" value="ECO:0007669"/>
    <property type="project" value="UniProtKB-UniRule"/>
</dbReference>
<dbReference type="GO" id="GO:0043771">
    <property type="term" value="F:cytidine kinase activity"/>
    <property type="evidence" value="ECO:0007669"/>
    <property type="project" value="RHEA"/>
</dbReference>
<dbReference type="GO" id="GO:0004849">
    <property type="term" value="F:uridine kinase activity"/>
    <property type="evidence" value="ECO:0007669"/>
    <property type="project" value="UniProtKB-UniRule"/>
</dbReference>
<dbReference type="GO" id="GO:0044211">
    <property type="term" value="P:CTP salvage"/>
    <property type="evidence" value="ECO:0007669"/>
    <property type="project" value="UniProtKB-UniRule"/>
</dbReference>
<dbReference type="GO" id="GO:0044206">
    <property type="term" value="P:UMP salvage"/>
    <property type="evidence" value="ECO:0007669"/>
    <property type="project" value="UniProtKB-UniRule"/>
</dbReference>
<dbReference type="CDD" id="cd02023">
    <property type="entry name" value="UMPK"/>
    <property type="match status" value="1"/>
</dbReference>
<dbReference type="Gene3D" id="3.40.50.300">
    <property type="entry name" value="P-loop containing nucleotide triphosphate hydrolases"/>
    <property type="match status" value="1"/>
</dbReference>
<dbReference type="HAMAP" id="MF_00551">
    <property type="entry name" value="Uridine_kinase"/>
    <property type="match status" value="1"/>
</dbReference>
<dbReference type="InterPro" id="IPR027417">
    <property type="entry name" value="P-loop_NTPase"/>
</dbReference>
<dbReference type="InterPro" id="IPR006083">
    <property type="entry name" value="PRK/URK"/>
</dbReference>
<dbReference type="InterPro" id="IPR026008">
    <property type="entry name" value="Uridine_kinase"/>
</dbReference>
<dbReference type="InterPro" id="IPR000764">
    <property type="entry name" value="Uridine_kinase-like"/>
</dbReference>
<dbReference type="NCBIfam" id="NF004018">
    <property type="entry name" value="PRK05480.1"/>
    <property type="match status" value="1"/>
</dbReference>
<dbReference type="NCBIfam" id="TIGR00235">
    <property type="entry name" value="udk"/>
    <property type="match status" value="1"/>
</dbReference>
<dbReference type="PANTHER" id="PTHR10285">
    <property type="entry name" value="URIDINE KINASE"/>
    <property type="match status" value="1"/>
</dbReference>
<dbReference type="Pfam" id="PF00485">
    <property type="entry name" value="PRK"/>
    <property type="match status" value="1"/>
</dbReference>
<dbReference type="PRINTS" id="PR00988">
    <property type="entry name" value="URIDINKINASE"/>
</dbReference>
<dbReference type="SUPFAM" id="SSF52540">
    <property type="entry name" value="P-loop containing nucleoside triphosphate hydrolases"/>
    <property type="match status" value="1"/>
</dbReference>
<sequence>MNSQQCVIIAIAGASASGKSLIAKTIFDELRRDLGTDQIGVINEDAYYRDQSHLSMDERVLTNYDHPKALDHQLLCTHLQLLKSGEAVDIPCYSYTEHTRTADTVTMTPKKVIILEGILLLTDPKLRELMDASVFMDTPLDICFLRRLTRDVAERGRTMESVISQYKKTVRPMFLQFIEPSKQYADIIVPRGGKNRIATDILKTRIQHLLAK</sequence>
<comment type="catalytic activity">
    <reaction evidence="1">
        <text>uridine + ATP = UMP + ADP + H(+)</text>
        <dbReference type="Rhea" id="RHEA:16825"/>
        <dbReference type="ChEBI" id="CHEBI:15378"/>
        <dbReference type="ChEBI" id="CHEBI:16704"/>
        <dbReference type="ChEBI" id="CHEBI:30616"/>
        <dbReference type="ChEBI" id="CHEBI:57865"/>
        <dbReference type="ChEBI" id="CHEBI:456216"/>
        <dbReference type="EC" id="2.7.1.48"/>
    </reaction>
</comment>
<comment type="catalytic activity">
    <reaction evidence="1">
        <text>cytidine + ATP = CMP + ADP + H(+)</text>
        <dbReference type="Rhea" id="RHEA:24674"/>
        <dbReference type="ChEBI" id="CHEBI:15378"/>
        <dbReference type="ChEBI" id="CHEBI:17562"/>
        <dbReference type="ChEBI" id="CHEBI:30616"/>
        <dbReference type="ChEBI" id="CHEBI:60377"/>
        <dbReference type="ChEBI" id="CHEBI:456216"/>
        <dbReference type="EC" id="2.7.1.48"/>
    </reaction>
</comment>
<comment type="pathway">
    <text evidence="1">Pyrimidine metabolism; CTP biosynthesis via salvage pathway; CTP from cytidine: step 1/3.</text>
</comment>
<comment type="pathway">
    <text evidence="1">Pyrimidine metabolism; UMP biosynthesis via salvage pathway; UMP from uridine: step 1/1.</text>
</comment>
<comment type="subcellular location">
    <subcellularLocation>
        <location evidence="1">Cytoplasm</location>
    </subcellularLocation>
</comment>
<comment type="similarity">
    <text evidence="1">Belongs to the uridine kinase family.</text>
</comment>
<gene>
    <name evidence="1" type="primary">udk</name>
    <name type="ordered locus">Sputcn32_2218</name>
</gene>